<feature type="chain" id="PRO_0000385830" description="GTPase Obg">
    <location>
        <begin position="1"/>
        <end position="439"/>
    </location>
</feature>
<feature type="domain" description="Obg" evidence="3">
    <location>
        <begin position="5"/>
        <end position="164"/>
    </location>
</feature>
<feature type="domain" description="OBG-type G" evidence="1">
    <location>
        <begin position="165"/>
        <end position="335"/>
    </location>
</feature>
<feature type="domain" description="OCT" evidence="2">
    <location>
        <begin position="356"/>
        <end position="433"/>
    </location>
</feature>
<feature type="binding site" evidence="1">
    <location>
        <begin position="171"/>
        <end position="178"/>
    </location>
    <ligand>
        <name>GTP</name>
        <dbReference type="ChEBI" id="CHEBI:37565"/>
    </ligand>
</feature>
<feature type="binding site" evidence="1">
    <location>
        <position position="178"/>
    </location>
    <ligand>
        <name>Mg(2+)</name>
        <dbReference type="ChEBI" id="CHEBI:18420"/>
    </ligand>
</feature>
<feature type="binding site" evidence="1">
    <location>
        <begin position="196"/>
        <end position="200"/>
    </location>
    <ligand>
        <name>GTP</name>
        <dbReference type="ChEBI" id="CHEBI:37565"/>
    </ligand>
</feature>
<feature type="binding site" evidence="1">
    <location>
        <position position="198"/>
    </location>
    <ligand>
        <name>Mg(2+)</name>
        <dbReference type="ChEBI" id="CHEBI:18420"/>
    </ligand>
</feature>
<feature type="binding site" evidence="1">
    <location>
        <begin position="217"/>
        <end position="220"/>
    </location>
    <ligand>
        <name>GTP</name>
        <dbReference type="ChEBI" id="CHEBI:37565"/>
    </ligand>
</feature>
<feature type="binding site" evidence="1">
    <location>
        <begin position="287"/>
        <end position="290"/>
    </location>
    <ligand>
        <name>GTP</name>
        <dbReference type="ChEBI" id="CHEBI:37565"/>
    </ligand>
</feature>
<feature type="binding site" evidence="1">
    <location>
        <begin position="316"/>
        <end position="318"/>
    </location>
    <ligand>
        <name>GTP</name>
        <dbReference type="ChEBI" id="CHEBI:37565"/>
    </ligand>
</feature>
<sequence length="439" mass="47654">MKTETDFFDQATIVVRAGNGGNGAATFRREKYVPRGGPNGGDGGRGGHVYLIADPEYNTLLHFRYQRKFVAENGGHGGKNAMHGRNGTDVYVPVPPGTVVRATIDGVTYSVDLARPGQRLLAARGGRGGLGNIHFATSTRQAPRLAELGEPGQELTLELELKMLADVGLVGFPNAGKSTLLSVISAARPKIAAYPFTTLTPNLGIVEVGLQRFVVADIPGLIEGAHAGVGLGHDFLRHVERTRLLIHIIDAAGVDGRYPWDDYEQINTELRLYQPELAQRKQVVALNKADLPAAQENLPILRERLPVAPEDLFVISAATGEGIEPLLRRVADLLRADPPPQRDPVDPDEPPLQWPLPEVDENAFTIEREGEAFRVRGIKIERLIAMSNLDQDEALDRIQRVLEASGINEALIAAGVQDGDLVRIGRAELVWDDSGQHAL</sequence>
<organism>
    <name type="scientific">Chloroflexus aurantiacus (strain ATCC 29366 / DSM 635 / J-10-fl)</name>
    <dbReference type="NCBI Taxonomy" id="324602"/>
    <lineage>
        <taxon>Bacteria</taxon>
        <taxon>Bacillati</taxon>
        <taxon>Chloroflexota</taxon>
        <taxon>Chloroflexia</taxon>
        <taxon>Chloroflexales</taxon>
        <taxon>Chloroflexineae</taxon>
        <taxon>Chloroflexaceae</taxon>
        <taxon>Chloroflexus</taxon>
    </lineage>
</organism>
<name>OBG_CHLAA</name>
<dbReference type="EC" id="3.6.5.-" evidence="1"/>
<dbReference type="EMBL" id="CP000909">
    <property type="protein sequence ID" value="ABY34513.1"/>
    <property type="molecule type" value="Genomic_DNA"/>
</dbReference>
<dbReference type="RefSeq" id="YP_001634902.1">
    <property type="nucleotide sequence ID" value="NC_010175.1"/>
</dbReference>
<dbReference type="SMR" id="A9WK62"/>
<dbReference type="FunCoup" id="A9WK62">
    <property type="interactions" value="430"/>
</dbReference>
<dbReference type="STRING" id="324602.Caur_1285"/>
<dbReference type="EnsemblBacteria" id="ABY34513">
    <property type="protein sequence ID" value="ABY34513"/>
    <property type="gene ID" value="Caur_1285"/>
</dbReference>
<dbReference type="KEGG" id="cau:Caur_1285"/>
<dbReference type="PATRIC" id="fig|324602.8.peg.1474"/>
<dbReference type="eggNOG" id="COG0536">
    <property type="taxonomic scope" value="Bacteria"/>
</dbReference>
<dbReference type="HOGENOM" id="CLU_011747_2_1_0"/>
<dbReference type="InParanoid" id="A9WK62"/>
<dbReference type="Proteomes" id="UP000002008">
    <property type="component" value="Chromosome"/>
</dbReference>
<dbReference type="GO" id="GO:0005737">
    <property type="term" value="C:cytoplasm"/>
    <property type="evidence" value="ECO:0007669"/>
    <property type="project" value="UniProtKB-SubCell"/>
</dbReference>
<dbReference type="GO" id="GO:0005525">
    <property type="term" value="F:GTP binding"/>
    <property type="evidence" value="ECO:0000318"/>
    <property type="project" value="GO_Central"/>
</dbReference>
<dbReference type="GO" id="GO:0003924">
    <property type="term" value="F:GTPase activity"/>
    <property type="evidence" value="ECO:0000318"/>
    <property type="project" value="GO_Central"/>
</dbReference>
<dbReference type="GO" id="GO:0000287">
    <property type="term" value="F:magnesium ion binding"/>
    <property type="evidence" value="ECO:0007669"/>
    <property type="project" value="InterPro"/>
</dbReference>
<dbReference type="GO" id="GO:0042254">
    <property type="term" value="P:ribosome biogenesis"/>
    <property type="evidence" value="ECO:0007669"/>
    <property type="project" value="UniProtKB-UniRule"/>
</dbReference>
<dbReference type="CDD" id="cd01898">
    <property type="entry name" value="Obg"/>
    <property type="match status" value="1"/>
</dbReference>
<dbReference type="FunFam" id="2.70.210.12:FF:000001">
    <property type="entry name" value="GTPase Obg"/>
    <property type="match status" value="1"/>
</dbReference>
<dbReference type="Gene3D" id="3.30.300.350">
    <property type="entry name" value="GTP-binding protein OBG, C-terminal domain"/>
    <property type="match status" value="1"/>
</dbReference>
<dbReference type="Gene3D" id="2.70.210.12">
    <property type="entry name" value="GTP1/OBG domain"/>
    <property type="match status" value="1"/>
</dbReference>
<dbReference type="Gene3D" id="3.40.50.300">
    <property type="entry name" value="P-loop containing nucleotide triphosphate hydrolases"/>
    <property type="match status" value="1"/>
</dbReference>
<dbReference type="HAMAP" id="MF_01454">
    <property type="entry name" value="GTPase_Obg"/>
    <property type="match status" value="1"/>
</dbReference>
<dbReference type="InterPro" id="IPR031167">
    <property type="entry name" value="G_OBG"/>
</dbReference>
<dbReference type="InterPro" id="IPR006073">
    <property type="entry name" value="GTP-bd"/>
</dbReference>
<dbReference type="InterPro" id="IPR014100">
    <property type="entry name" value="GTP-bd_Obg/CgtA"/>
</dbReference>
<dbReference type="InterPro" id="IPR036346">
    <property type="entry name" value="GTP-bd_prot_GTP1/OBG_C_sf"/>
</dbReference>
<dbReference type="InterPro" id="IPR006074">
    <property type="entry name" value="GTP1-OBG_CS"/>
</dbReference>
<dbReference type="InterPro" id="IPR006169">
    <property type="entry name" value="GTP1_OBG_dom"/>
</dbReference>
<dbReference type="InterPro" id="IPR036726">
    <property type="entry name" value="GTP1_OBG_dom_sf"/>
</dbReference>
<dbReference type="InterPro" id="IPR045086">
    <property type="entry name" value="OBG_GTPase"/>
</dbReference>
<dbReference type="InterPro" id="IPR015349">
    <property type="entry name" value="OCT_dom"/>
</dbReference>
<dbReference type="InterPro" id="IPR027417">
    <property type="entry name" value="P-loop_NTPase"/>
</dbReference>
<dbReference type="NCBIfam" id="TIGR02729">
    <property type="entry name" value="Obg_CgtA"/>
    <property type="match status" value="1"/>
</dbReference>
<dbReference type="NCBIfam" id="TIGR03595">
    <property type="entry name" value="Obg_CgtA_exten"/>
    <property type="match status" value="1"/>
</dbReference>
<dbReference type="NCBIfam" id="NF008954">
    <property type="entry name" value="PRK12296.1"/>
    <property type="match status" value="1"/>
</dbReference>
<dbReference type="NCBIfam" id="NF008955">
    <property type="entry name" value="PRK12297.1"/>
    <property type="match status" value="1"/>
</dbReference>
<dbReference type="NCBIfam" id="NF008956">
    <property type="entry name" value="PRK12299.1"/>
    <property type="match status" value="1"/>
</dbReference>
<dbReference type="PANTHER" id="PTHR11702">
    <property type="entry name" value="DEVELOPMENTALLY REGULATED GTP-BINDING PROTEIN-RELATED"/>
    <property type="match status" value="1"/>
</dbReference>
<dbReference type="PANTHER" id="PTHR11702:SF31">
    <property type="entry name" value="MITOCHONDRIAL RIBOSOME-ASSOCIATED GTPASE 2"/>
    <property type="match status" value="1"/>
</dbReference>
<dbReference type="Pfam" id="PF09269">
    <property type="entry name" value="DUF1967"/>
    <property type="match status" value="1"/>
</dbReference>
<dbReference type="Pfam" id="PF01018">
    <property type="entry name" value="GTP1_OBG"/>
    <property type="match status" value="1"/>
</dbReference>
<dbReference type="Pfam" id="PF01926">
    <property type="entry name" value="MMR_HSR1"/>
    <property type="match status" value="1"/>
</dbReference>
<dbReference type="PRINTS" id="PR00326">
    <property type="entry name" value="GTP1OBG"/>
</dbReference>
<dbReference type="SUPFAM" id="SSF102741">
    <property type="entry name" value="Obg GTP-binding protein C-terminal domain"/>
    <property type="match status" value="1"/>
</dbReference>
<dbReference type="SUPFAM" id="SSF82051">
    <property type="entry name" value="Obg GTP-binding protein N-terminal domain"/>
    <property type="match status" value="1"/>
</dbReference>
<dbReference type="SUPFAM" id="SSF52540">
    <property type="entry name" value="P-loop containing nucleoside triphosphate hydrolases"/>
    <property type="match status" value="1"/>
</dbReference>
<dbReference type="PROSITE" id="PS51710">
    <property type="entry name" value="G_OBG"/>
    <property type="match status" value="1"/>
</dbReference>
<dbReference type="PROSITE" id="PS00905">
    <property type="entry name" value="GTP1_OBG"/>
    <property type="match status" value="1"/>
</dbReference>
<dbReference type="PROSITE" id="PS51883">
    <property type="entry name" value="OBG"/>
    <property type="match status" value="1"/>
</dbReference>
<dbReference type="PROSITE" id="PS51881">
    <property type="entry name" value="OCT"/>
    <property type="match status" value="1"/>
</dbReference>
<reference key="1">
    <citation type="journal article" date="2011" name="BMC Genomics">
        <title>Complete genome sequence of the filamentous anoxygenic phototrophic bacterium Chloroflexus aurantiacus.</title>
        <authorList>
            <person name="Tang K.H."/>
            <person name="Barry K."/>
            <person name="Chertkov O."/>
            <person name="Dalin E."/>
            <person name="Han C.S."/>
            <person name="Hauser L.J."/>
            <person name="Honchak B.M."/>
            <person name="Karbach L.E."/>
            <person name="Land M.L."/>
            <person name="Lapidus A."/>
            <person name="Larimer F.W."/>
            <person name="Mikhailova N."/>
            <person name="Pitluck S."/>
            <person name="Pierson B.K."/>
            <person name="Blankenship R.E."/>
        </authorList>
    </citation>
    <scope>NUCLEOTIDE SEQUENCE [LARGE SCALE GENOMIC DNA]</scope>
    <source>
        <strain>ATCC 29366 / DSM 635 / J-10-fl</strain>
    </source>
</reference>
<proteinExistence type="inferred from homology"/>
<evidence type="ECO:0000255" key="1">
    <source>
        <dbReference type="HAMAP-Rule" id="MF_01454"/>
    </source>
</evidence>
<evidence type="ECO:0000255" key="2">
    <source>
        <dbReference type="PROSITE-ProRule" id="PRU01229"/>
    </source>
</evidence>
<evidence type="ECO:0000255" key="3">
    <source>
        <dbReference type="PROSITE-ProRule" id="PRU01231"/>
    </source>
</evidence>
<protein>
    <recommendedName>
        <fullName evidence="1">GTPase Obg</fullName>
        <ecNumber evidence="1">3.6.5.-</ecNumber>
    </recommendedName>
    <alternativeName>
        <fullName evidence="1">GTP-binding protein Obg</fullName>
    </alternativeName>
</protein>
<keyword id="KW-0963">Cytoplasm</keyword>
<keyword id="KW-0342">GTP-binding</keyword>
<keyword id="KW-0378">Hydrolase</keyword>
<keyword id="KW-0460">Magnesium</keyword>
<keyword id="KW-0479">Metal-binding</keyword>
<keyword id="KW-0547">Nucleotide-binding</keyword>
<keyword id="KW-1185">Reference proteome</keyword>
<comment type="function">
    <text evidence="1">An essential GTPase which binds GTP, GDP and possibly (p)ppGpp with moderate affinity, with high nucleotide exchange rates and a fairly low GTP hydrolysis rate. Plays a role in control of the cell cycle, stress response, ribosome biogenesis and in those bacteria that undergo differentiation, in morphogenesis control.</text>
</comment>
<comment type="cofactor">
    <cofactor evidence="1">
        <name>Mg(2+)</name>
        <dbReference type="ChEBI" id="CHEBI:18420"/>
    </cofactor>
</comment>
<comment type="subunit">
    <text evidence="1">Monomer.</text>
</comment>
<comment type="subcellular location">
    <subcellularLocation>
        <location evidence="1">Cytoplasm</location>
    </subcellularLocation>
</comment>
<comment type="similarity">
    <text evidence="1">Belongs to the TRAFAC class OBG-HflX-like GTPase superfamily. OBG GTPase family.</text>
</comment>
<accession>A9WK62</accession>
<gene>
    <name evidence="1" type="primary">obg</name>
    <name type="ordered locus">Caur_1285</name>
</gene>